<protein>
    <recommendedName>
        <fullName evidence="1">Vitamin B12 import system permease protein BtuC</fullName>
    </recommendedName>
</protein>
<dbReference type="EMBL" id="CP000802">
    <property type="protein sequence ID" value="ABV06107.1"/>
    <property type="molecule type" value="Genomic_DNA"/>
</dbReference>
<dbReference type="RefSeq" id="WP_000956529.1">
    <property type="nucleotide sequence ID" value="NC_009800.1"/>
</dbReference>
<dbReference type="SMR" id="A8A0Q3"/>
<dbReference type="KEGG" id="ecx:EcHS_A1791"/>
<dbReference type="HOGENOM" id="CLU_013016_0_3_6"/>
<dbReference type="GO" id="GO:0005886">
    <property type="term" value="C:plasma membrane"/>
    <property type="evidence" value="ECO:0007669"/>
    <property type="project" value="UniProtKB-SubCell"/>
</dbReference>
<dbReference type="GO" id="GO:0090482">
    <property type="term" value="F:vitamin transmembrane transporter activity"/>
    <property type="evidence" value="ECO:0007669"/>
    <property type="project" value="UniProtKB-UniRule"/>
</dbReference>
<dbReference type="GO" id="GO:0015889">
    <property type="term" value="P:cobalamin transport"/>
    <property type="evidence" value="ECO:0007669"/>
    <property type="project" value="UniProtKB-UniRule"/>
</dbReference>
<dbReference type="CDD" id="cd06550">
    <property type="entry name" value="TM_ABC_iron-siderophores_like"/>
    <property type="match status" value="1"/>
</dbReference>
<dbReference type="FunFam" id="1.10.3470.10:FF:000001">
    <property type="entry name" value="Vitamin B12 ABC transporter permease BtuC"/>
    <property type="match status" value="1"/>
</dbReference>
<dbReference type="Gene3D" id="1.10.3470.10">
    <property type="entry name" value="ABC transporter involved in vitamin B12 uptake, BtuC"/>
    <property type="match status" value="1"/>
</dbReference>
<dbReference type="HAMAP" id="MF_01004">
    <property type="entry name" value="BtuC"/>
    <property type="match status" value="1"/>
</dbReference>
<dbReference type="InterPro" id="IPR037294">
    <property type="entry name" value="ABC_BtuC-like"/>
</dbReference>
<dbReference type="InterPro" id="IPR023691">
    <property type="entry name" value="ABC_transptr_BtuC"/>
</dbReference>
<dbReference type="InterPro" id="IPR000522">
    <property type="entry name" value="ABC_transptr_permease_BtuC"/>
</dbReference>
<dbReference type="NCBIfam" id="NF003001">
    <property type="entry name" value="PRK03784.1"/>
    <property type="match status" value="1"/>
</dbReference>
<dbReference type="PANTHER" id="PTHR30472">
    <property type="entry name" value="FERRIC ENTEROBACTIN TRANSPORT SYSTEM PERMEASE PROTEIN"/>
    <property type="match status" value="1"/>
</dbReference>
<dbReference type="PANTHER" id="PTHR30472:SF29">
    <property type="entry name" value="VITAMIN B12 IMPORT SYSTEM PERMEASE PROTEIN BTUC"/>
    <property type="match status" value="1"/>
</dbReference>
<dbReference type="Pfam" id="PF01032">
    <property type="entry name" value="FecCD"/>
    <property type="match status" value="1"/>
</dbReference>
<dbReference type="SUPFAM" id="SSF81345">
    <property type="entry name" value="ABC transporter involved in vitamin B12 uptake, BtuC"/>
    <property type="match status" value="1"/>
</dbReference>
<accession>A8A0Q3</accession>
<feature type="chain" id="PRO_1000062772" description="Vitamin B12 import system permease protein BtuC">
    <location>
        <begin position="1"/>
        <end position="326"/>
    </location>
</feature>
<feature type="transmembrane region" description="Helical" evidence="1">
    <location>
        <begin position="15"/>
        <end position="35"/>
    </location>
</feature>
<feature type="transmembrane region" description="Helical" evidence="1">
    <location>
        <begin position="61"/>
        <end position="81"/>
    </location>
</feature>
<feature type="transmembrane region" description="Helical" evidence="1">
    <location>
        <begin position="88"/>
        <end position="108"/>
    </location>
</feature>
<feature type="transmembrane region" description="Helical" evidence="1">
    <location>
        <begin position="112"/>
        <end position="132"/>
    </location>
</feature>
<feature type="transmembrane region" description="Helical" evidence="1">
    <location>
        <begin position="146"/>
        <end position="166"/>
    </location>
</feature>
<feature type="transmembrane region" description="Helical" evidence="1">
    <location>
        <begin position="184"/>
        <end position="204"/>
    </location>
</feature>
<feature type="transmembrane region" description="Helical" evidence="1">
    <location>
        <begin position="240"/>
        <end position="260"/>
    </location>
</feature>
<feature type="transmembrane region" description="Helical" evidence="1">
    <location>
        <begin position="274"/>
        <end position="294"/>
    </location>
</feature>
<feature type="transmembrane region" description="Helical" evidence="1">
    <location>
        <begin position="302"/>
        <end position="322"/>
    </location>
</feature>
<proteinExistence type="inferred from homology"/>
<organism>
    <name type="scientific">Escherichia coli O9:H4 (strain HS)</name>
    <dbReference type="NCBI Taxonomy" id="331112"/>
    <lineage>
        <taxon>Bacteria</taxon>
        <taxon>Pseudomonadati</taxon>
        <taxon>Pseudomonadota</taxon>
        <taxon>Gammaproteobacteria</taxon>
        <taxon>Enterobacterales</taxon>
        <taxon>Enterobacteriaceae</taxon>
        <taxon>Escherichia</taxon>
    </lineage>
</organism>
<keyword id="KW-0997">Cell inner membrane</keyword>
<keyword id="KW-1003">Cell membrane</keyword>
<keyword id="KW-0472">Membrane</keyword>
<keyword id="KW-0812">Transmembrane</keyword>
<keyword id="KW-1133">Transmembrane helix</keyword>
<keyword id="KW-0813">Transport</keyword>
<evidence type="ECO:0000255" key="1">
    <source>
        <dbReference type="HAMAP-Rule" id="MF_01004"/>
    </source>
</evidence>
<name>BTUC_ECOHS</name>
<sequence length="326" mass="35048">MLTLARQQQRQNIRWLLCLSVLMLLALLLSLCAGEQWISPGDWFTPRGELFVWQIRLPRTLAVLLVGAALAISGAVMQALFENPLAEPGLLGVSNGAGVGLIAAVLLGQGQLPNWALGLCAIAGALIITLILLRFARRHLSTSRLLLAGVALGIICSALMTWAIYFSTSVDLRQLMYWMMGGFGGVDWRQSWLMLALIPVLLWICCQSRPMNMLALGEISARQLGLPLWFWRNVLVAATGWMVGVSVALAGAIGFIGLVIPHILRLCGLTDHRVLLPGCALAGASALLLADIVARLALAAAELPIGVVTATLGAPVFIWLLLKARR</sequence>
<gene>
    <name evidence="1" type="primary">btuC</name>
    <name type="ordered locus">EcHS_A1791</name>
</gene>
<reference key="1">
    <citation type="journal article" date="2008" name="J. Bacteriol.">
        <title>The pangenome structure of Escherichia coli: comparative genomic analysis of E. coli commensal and pathogenic isolates.</title>
        <authorList>
            <person name="Rasko D.A."/>
            <person name="Rosovitz M.J."/>
            <person name="Myers G.S.A."/>
            <person name="Mongodin E.F."/>
            <person name="Fricke W.F."/>
            <person name="Gajer P."/>
            <person name="Crabtree J."/>
            <person name="Sebaihia M."/>
            <person name="Thomson N.R."/>
            <person name="Chaudhuri R."/>
            <person name="Henderson I.R."/>
            <person name="Sperandio V."/>
            <person name="Ravel J."/>
        </authorList>
    </citation>
    <scope>NUCLEOTIDE SEQUENCE [LARGE SCALE GENOMIC DNA]</scope>
    <source>
        <strain>HS</strain>
    </source>
</reference>
<comment type="function">
    <text evidence="1">Part of the ABC transporter complex BtuCDF involved in vitamin B12 import. Involved in the translocation of the substrate across the membrane.</text>
</comment>
<comment type="subunit">
    <text evidence="1">The complex is composed of two ATP-binding proteins (BtuD), two transmembrane proteins (BtuC) and a solute-binding protein (BtuF).</text>
</comment>
<comment type="subcellular location">
    <subcellularLocation>
        <location evidence="1">Cell inner membrane</location>
        <topology evidence="1">Multi-pass membrane protein</topology>
    </subcellularLocation>
</comment>
<comment type="similarity">
    <text evidence="1">Belongs to the binding-protein-dependent transport system permease family. FecCD subfamily.</text>
</comment>